<proteinExistence type="inferred from homology"/>
<organism>
    <name type="scientific">Legionella pneumophila subsp. pneumophila (strain Philadelphia 1 / ATCC 33152 / DSM 7513)</name>
    <dbReference type="NCBI Taxonomy" id="272624"/>
    <lineage>
        <taxon>Bacteria</taxon>
        <taxon>Pseudomonadati</taxon>
        <taxon>Pseudomonadota</taxon>
        <taxon>Gammaproteobacteria</taxon>
        <taxon>Legionellales</taxon>
        <taxon>Legionellaceae</taxon>
        <taxon>Legionella</taxon>
    </lineage>
</organism>
<dbReference type="EMBL" id="AE017354">
    <property type="protein sequence ID" value="AAU28936.1"/>
    <property type="molecule type" value="Genomic_DNA"/>
</dbReference>
<dbReference type="RefSeq" id="WP_010948575.1">
    <property type="nucleotide sequence ID" value="NC_002942.5"/>
</dbReference>
<dbReference type="RefSeq" id="YP_096883.1">
    <property type="nucleotide sequence ID" value="NC_002942.5"/>
</dbReference>
<dbReference type="SMR" id="Q5ZRJ2"/>
<dbReference type="STRING" id="272624.lpg2889"/>
<dbReference type="PaxDb" id="272624-lpg2889"/>
<dbReference type="GeneID" id="57036888"/>
<dbReference type="KEGG" id="lpn:lpg2889"/>
<dbReference type="PATRIC" id="fig|272624.6.peg.3077"/>
<dbReference type="eggNOG" id="COG0445">
    <property type="taxonomic scope" value="Bacteria"/>
</dbReference>
<dbReference type="HOGENOM" id="CLU_007831_2_2_6"/>
<dbReference type="OrthoDB" id="9815560at2"/>
<dbReference type="Proteomes" id="UP000000609">
    <property type="component" value="Chromosome"/>
</dbReference>
<dbReference type="GO" id="GO:0005829">
    <property type="term" value="C:cytosol"/>
    <property type="evidence" value="ECO:0007669"/>
    <property type="project" value="TreeGrafter"/>
</dbReference>
<dbReference type="GO" id="GO:0050660">
    <property type="term" value="F:flavin adenine dinucleotide binding"/>
    <property type="evidence" value="ECO:0007669"/>
    <property type="project" value="UniProtKB-UniRule"/>
</dbReference>
<dbReference type="GO" id="GO:0030488">
    <property type="term" value="P:tRNA methylation"/>
    <property type="evidence" value="ECO:0007669"/>
    <property type="project" value="TreeGrafter"/>
</dbReference>
<dbReference type="GO" id="GO:0002098">
    <property type="term" value="P:tRNA wobble uridine modification"/>
    <property type="evidence" value="ECO:0007669"/>
    <property type="project" value="InterPro"/>
</dbReference>
<dbReference type="FunFam" id="1.10.150.570:FF:000001">
    <property type="entry name" value="tRNA uridine 5-carboxymethylaminomethyl modification enzyme MnmG"/>
    <property type="match status" value="1"/>
</dbReference>
<dbReference type="FunFam" id="3.50.50.60:FF:000002">
    <property type="entry name" value="tRNA uridine 5-carboxymethylaminomethyl modification enzyme MnmG"/>
    <property type="match status" value="1"/>
</dbReference>
<dbReference type="FunFam" id="3.50.50.60:FF:000010">
    <property type="entry name" value="tRNA uridine 5-carboxymethylaminomethyl modification enzyme MnmG"/>
    <property type="match status" value="1"/>
</dbReference>
<dbReference type="Gene3D" id="3.50.50.60">
    <property type="entry name" value="FAD/NAD(P)-binding domain"/>
    <property type="match status" value="2"/>
</dbReference>
<dbReference type="Gene3D" id="1.10.150.570">
    <property type="entry name" value="GidA associated domain, C-terminal subdomain"/>
    <property type="match status" value="1"/>
</dbReference>
<dbReference type="Gene3D" id="1.10.10.1800">
    <property type="entry name" value="tRNA uridine 5-carboxymethylaminomethyl modification enzyme MnmG/GidA"/>
    <property type="match status" value="1"/>
</dbReference>
<dbReference type="HAMAP" id="MF_00129">
    <property type="entry name" value="MnmG_GidA"/>
    <property type="match status" value="1"/>
</dbReference>
<dbReference type="InterPro" id="IPR036188">
    <property type="entry name" value="FAD/NAD-bd_sf"/>
</dbReference>
<dbReference type="InterPro" id="IPR049312">
    <property type="entry name" value="GIDA_C_N"/>
</dbReference>
<dbReference type="InterPro" id="IPR004416">
    <property type="entry name" value="MnmG"/>
</dbReference>
<dbReference type="InterPro" id="IPR002218">
    <property type="entry name" value="MnmG-rel"/>
</dbReference>
<dbReference type="InterPro" id="IPR020595">
    <property type="entry name" value="MnmG-rel_CS"/>
</dbReference>
<dbReference type="InterPro" id="IPR026904">
    <property type="entry name" value="MnmG_C"/>
</dbReference>
<dbReference type="InterPro" id="IPR047001">
    <property type="entry name" value="MnmG_C_subdom"/>
</dbReference>
<dbReference type="InterPro" id="IPR044920">
    <property type="entry name" value="MnmG_C_subdom_sf"/>
</dbReference>
<dbReference type="InterPro" id="IPR040131">
    <property type="entry name" value="MnmG_N"/>
</dbReference>
<dbReference type="NCBIfam" id="TIGR00136">
    <property type="entry name" value="mnmG_gidA"/>
    <property type="match status" value="1"/>
</dbReference>
<dbReference type="PANTHER" id="PTHR11806">
    <property type="entry name" value="GLUCOSE INHIBITED DIVISION PROTEIN A"/>
    <property type="match status" value="1"/>
</dbReference>
<dbReference type="PANTHER" id="PTHR11806:SF0">
    <property type="entry name" value="PROTEIN MTO1 HOMOLOG, MITOCHONDRIAL"/>
    <property type="match status" value="1"/>
</dbReference>
<dbReference type="Pfam" id="PF01134">
    <property type="entry name" value="GIDA"/>
    <property type="match status" value="1"/>
</dbReference>
<dbReference type="Pfam" id="PF21680">
    <property type="entry name" value="GIDA_C_1st"/>
    <property type="match status" value="1"/>
</dbReference>
<dbReference type="Pfam" id="PF13932">
    <property type="entry name" value="SAM_GIDA_C"/>
    <property type="match status" value="1"/>
</dbReference>
<dbReference type="PRINTS" id="PR00411">
    <property type="entry name" value="PNDRDTASEI"/>
</dbReference>
<dbReference type="SMART" id="SM01228">
    <property type="entry name" value="GIDA_assoc_3"/>
    <property type="match status" value="1"/>
</dbReference>
<dbReference type="SUPFAM" id="SSF51905">
    <property type="entry name" value="FAD/NAD(P)-binding domain"/>
    <property type="match status" value="1"/>
</dbReference>
<dbReference type="PROSITE" id="PS01280">
    <property type="entry name" value="GIDA_1"/>
    <property type="match status" value="1"/>
</dbReference>
<dbReference type="PROSITE" id="PS01281">
    <property type="entry name" value="GIDA_2"/>
    <property type="match status" value="1"/>
</dbReference>
<name>MNMG_LEGPH</name>
<comment type="function">
    <text evidence="1">NAD-binding protein involved in the addition of a carboxymethylaminomethyl (cmnm) group at the wobble position (U34) of certain tRNAs, forming tRNA-cmnm(5)s(2)U34.</text>
</comment>
<comment type="cofactor">
    <cofactor evidence="1">
        <name>FAD</name>
        <dbReference type="ChEBI" id="CHEBI:57692"/>
    </cofactor>
</comment>
<comment type="subunit">
    <text evidence="1">Homodimer. Heterotetramer of two MnmE and two MnmG subunits.</text>
</comment>
<comment type="subcellular location">
    <subcellularLocation>
        <location evidence="1">Cytoplasm</location>
    </subcellularLocation>
</comment>
<comment type="similarity">
    <text evidence="1">Belongs to the MnmG family.</text>
</comment>
<reference key="1">
    <citation type="journal article" date="2004" name="Science">
        <title>The genomic sequence of the accidental pathogen Legionella pneumophila.</title>
        <authorList>
            <person name="Chien M."/>
            <person name="Morozova I."/>
            <person name="Shi S."/>
            <person name="Sheng H."/>
            <person name="Chen J."/>
            <person name="Gomez S.M."/>
            <person name="Asamani G."/>
            <person name="Hill K."/>
            <person name="Nuara J."/>
            <person name="Feder M."/>
            <person name="Rineer J."/>
            <person name="Greenberg J.J."/>
            <person name="Steshenko V."/>
            <person name="Park S.H."/>
            <person name="Zhao B."/>
            <person name="Teplitskaya E."/>
            <person name="Edwards J.R."/>
            <person name="Pampou S."/>
            <person name="Georghiou A."/>
            <person name="Chou I.-C."/>
            <person name="Iannuccilli W."/>
            <person name="Ulz M.E."/>
            <person name="Kim D.H."/>
            <person name="Geringer-Sameth A."/>
            <person name="Goldsberry C."/>
            <person name="Morozov P."/>
            <person name="Fischer S.G."/>
            <person name="Segal G."/>
            <person name="Qu X."/>
            <person name="Rzhetsky A."/>
            <person name="Zhang P."/>
            <person name="Cayanis E."/>
            <person name="De Jong P.J."/>
            <person name="Ju J."/>
            <person name="Kalachikov S."/>
            <person name="Shuman H.A."/>
            <person name="Russo J.J."/>
        </authorList>
    </citation>
    <scope>NUCLEOTIDE SEQUENCE [LARGE SCALE GENOMIC DNA]</scope>
    <source>
        <strain>Philadelphia 1 / ATCC 33152 / DSM 7513</strain>
    </source>
</reference>
<protein>
    <recommendedName>
        <fullName evidence="1">tRNA uridine 5-carboxymethylaminomethyl modification enzyme MnmG</fullName>
    </recommendedName>
    <alternativeName>
        <fullName evidence="1">Glucose-inhibited division protein A</fullName>
    </alternativeName>
</protein>
<keyword id="KW-0963">Cytoplasm</keyword>
<keyword id="KW-0274">FAD</keyword>
<keyword id="KW-0285">Flavoprotein</keyword>
<keyword id="KW-0520">NAD</keyword>
<keyword id="KW-1185">Reference proteome</keyword>
<keyword id="KW-0819">tRNA processing</keyword>
<accession>Q5ZRJ2</accession>
<evidence type="ECO:0000255" key="1">
    <source>
        <dbReference type="HAMAP-Rule" id="MF_00129"/>
    </source>
</evidence>
<gene>
    <name evidence="1" type="primary">mnmG</name>
    <name evidence="1" type="synonym">gidA</name>
    <name type="ordered locus">lpg2889</name>
</gene>
<sequence length="624" mass="69123">MNLEQLYDVIVVGGGHAGTEAALAAARLGVKTLLLTHNIDLLGQMSCNPAIGGIGKGHLVKEIDALDGAMAKAADQAGIQFRILNASKGPAVRATRAQADRVLYRKAIRTQLQSQANLTIFQQAVDDLKIEGGLVTGVVTQMGLTLKARAVVLTVGTFLGGKIHVGMNQYAGGRAGDPPSIALSKSLRDLDLPVGRLKTGTPPRIDRRTIDFSQMVEQPGDTPVPVFSYLGAASDHPQQVPCHITHTTEATHDIIRNNLDKSPMYAGVIEGVGPRYCPSIEDKIVRFADKTSHQIFVEPEGLTTEEIYPNGISTSLPFEVQVQFVRTIKGFENAHITRPGYAIEYDYFDPRGLTSFLQTKAIPNLFFAGQINGTTGYEEAAAQGIIAGMNAALQIKDQELWCPRRDEAYIGVLIDDLITCGTQEPYRMFTSRAEYRLLLREDNADLRLTEKGRQLGLVGDERWDSFSKKREAIESTQALLYNSWVRVHHNDLFKETLFNPMQHDCRAVEFLKRPEINYQHLLMMDDLNLPELPQEITEQIEIQNKYAGYIDRQQQEIEKLRKHENTLLPETLDYNDVVGLSSEVIQKLNRIKPTSLAQAGRISGVTPAALSLLLVHLKKSRLPV</sequence>
<feature type="chain" id="PRO_0000117122" description="tRNA uridine 5-carboxymethylaminomethyl modification enzyme MnmG">
    <location>
        <begin position="1"/>
        <end position="624"/>
    </location>
</feature>
<feature type="binding site" evidence="1">
    <location>
        <begin position="13"/>
        <end position="18"/>
    </location>
    <ligand>
        <name>FAD</name>
        <dbReference type="ChEBI" id="CHEBI:57692"/>
    </ligand>
</feature>
<feature type="binding site" evidence="1">
    <location>
        <position position="125"/>
    </location>
    <ligand>
        <name>FAD</name>
        <dbReference type="ChEBI" id="CHEBI:57692"/>
    </ligand>
</feature>
<feature type="binding site" evidence="1">
    <location>
        <position position="180"/>
    </location>
    <ligand>
        <name>FAD</name>
        <dbReference type="ChEBI" id="CHEBI:57692"/>
    </ligand>
</feature>
<feature type="binding site" evidence="1">
    <location>
        <begin position="273"/>
        <end position="287"/>
    </location>
    <ligand>
        <name>NAD(+)</name>
        <dbReference type="ChEBI" id="CHEBI:57540"/>
    </ligand>
</feature>
<feature type="binding site" evidence="1">
    <location>
        <position position="370"/>
    </location>
    <ligand>
        <name>FAD</name>
        <dbReference type="ChEBI" id="CHEBI:57692"/>
    </ligand>
</feature>